<organism>
    <name type="scientific">Agrobacterium fabrum (strain C58 / ATCC 33970)</name>
    <name type="common">Agrobacterium tumefaciens (strain C58)</name>
    <dbReference type="NCBI Taxonomy" id="176299"/>
    <lineage>
        <taxon>Bacteria</taxon>
        <taxon>Pseudomonadati</taxon>
        <taxon>Pseudomonadota</taxon>
        <taxon>Alphaproteobacteria</taxon>
        <taxon>Hyphomicrobiales</taxon>
        <taxon>Rhizobiaceae</taxon>
        <taxon>Rhizobium/Agrobacterium group</taxon>
        <taxon>Agrobacterium</taxon>
        <taxon>Agrobacterium tumefaciens complex</taxon>
    </lineage>
</organism>
<proteinExistence type="inferred from homology"/>
<accession>Q8UCA5</accession>
<accession>Q7CWP4</accession>
<comment type="subcellular location">
    <subcellularLocation>
        <location evidence="1">Cytoplasm</location>
    </subcellularLocation>
</comment>
<comment type="similarity">
    <text evidence="1">Belongs to the CutC family.</text>
</comment>
<comment type="caution">
    <text evidence="1">Once thought to be involved in copper homeostasis, experiments in E.coli have shown this is not the case.</text>
</comment>
<comment type="sequence caution" evidence="2">
    <conflict type="erroneous initiation">
        <sequence resource="EMBL-CDS" id="AAK88316"/>
    </conflict>
    <text>Truncated N-terminus.</text>
</comment>
<reference key="1">
    <citation type="journal article" date="2001" name="Science">
        <title>The genome of the natural genetic engineer Agrobacterium tumefaciens C58.</title>
        <authorList>
            <person name="Wood D.W."/>
            <person name="Setubal J.C."/>
            <person name="Kaul R."/>
            <person name="Monks D.E."/>
            <person name="Kitajima J.P."/>
            <person name="Okura V.K."/>
            <person name="Zhou Y."/>
            <person name="Chen L."/>
            <person name="Wood G.E."/>
            <person name="Almeida N.F. Jr."/>
            <person name="Woo L."/>
            <person name="Chen Y."/>
            <person name="Paulsen I.T."/>
            <person name="Eisen J.A."/>
            <person name="Karp P.D."/>
            <person name="Bovee D. Sr."/>
            <person name="Chapman P."/>
            <person name="Clendenning J."/>
            <person name="Deatherage G."/>
            <person name="Gillet W."/>
            <person name="Grant C."/>
            <person name="Kutyavin T."/>
            <person name="Levy R."/>
            <person name="Li M.-J."/>
            <person name="McClelland E."/>
            <person name="Palmieri A."/>
            <person name="Raymond C."/>
            <person name="Rouse G."/>
            <person name="Saenphimmachak C."/>
            <person name="Wu Z."/>
            <person name="Romero P."/>
            <person name="Gordon D."/>
            <person name="Zhang S."/>
            <person name="Yoo H."/>
            <person name="Tao Y."/>
            <person name="Biddle P."/>
            <person name="Jung M."/>
            <person name="Krespan W."/>
            <person name="Perry M."/>
            <person name="Gordon-Kamm B."/>
            <person name="Liao L."/>
            <person name="Kim S."/>
            <person name="Hendrick C."/>
            <person name="Zhao Z.-Y."/>
            <person name="Dolan M."/>
            <person name="Chumley F."/>
            <person name="Tingey S.V."/>
            <person name="Tomb J.-F."/>
            <person name="Gordon M.P."/>
            <person name="Olson M.V."/>
            <person name="Nester E.W."/>
        </authorList>
    </citation>
    <scope>NUCLEOTIDE SEQUENCE [LARGE SCALE GENOMIC DNA]</scope>
    <source>
        <strain>C58 / ATCC 33970</strain>
    </source>
</reference>
<reference key="2">
    <citation type="journal article" date="2001" name="Science">
        <title>Genome sequence of the plant pathogen and biotechnology agent Agrobacterium tumefaciens C58.</title>
        <authorList>
            <person name="Goodner B."/>
            <person name="Hinkle G."/>
            <person name="Gattung S."/>
            <person name="Miller N."/>
            <person name="Blanchard M."/>
            <person name="Qurollo B."/>
            <person name="Goldman B.S."/>
            <person name="Cao Y."/>
            <person name="Askenazi M."/>
            <person name="Halling C."/>
            <person name="Mullin L."/>
            <person name="Houmiel K."/>
            <person name="Gordon J."/>
            <person name="Vaudin M."/>
            <person name="Iartchouk O."/>
            <person name="Epp A."/>
            <person name="Liu F."/>
            <person name="Wollam C."/>
            <person name="Allinger M."/>
            <person name="Doughty D."/>
            <person name="Scott C."/>
            <person name="Lappas C."/>
            <person name="Markelz B."/>
            <person name="Flanagan C."/>
            <person name="Crowell C."/>
            <person name="Gurson J."/>
            <person name="Lomo C."/>
            <person name="Sear C."/>
            <person name="Strub G."/>
            <person name="Cielo C."/>
            <person name="Slater S."/>
        </authorList>
    </citation>
    <scope>NUCLEOTIDE SEQUENCE [LARGE SCALE GENOMIC DNA]</scope>
    <source>
        <strain>C58 / ATCC 33970</strain>
    </source>
</reference>
<feature type="chain" id="PRO_0000215059" description="PF03932 family protein CutC">
    <location>
        <begin position="1"/>
        <end position="251"/>
    </location>
</feature>
<evidence type="ECO:0000255" key="1">
    <source>
        <dbReference type="HAMAP-Rule" id="MF_00795"/>
    </source>
</evidence>
<evidence type="ECO:0000305" key="2"/>
<dbReference type="EMBL" id="AE007869">
    <property type="protein sequence ID" value="AAK88316.2"/>
    <property type="status" value="ALT_INIT"/>
    <property type="molecule type" value="Genomic_DNA"/>
</dbReference>
<dbReference type="PIR" id="AH2894">
    <property type="entry name" value="AH2894"/>
</dbReference>
<dbReference type="PIR" id="C97670">
    <property type="entry name" value="C97670"/>
</dbReference>
<dbReference type="RefSeq" id="NP_355531.2">
    <property type="nucleotide sequence ID" value="NC_003062.2"/>
</dbReference>
<dbReference type="RefSeq" id="WP_010972424.1">
    <property type="nucleotide sequence ID" value="NC_003062.2"/>
</dbReference>
<dbReference type="SMR" id="Q8UCA5"/>
<dbReference type="STRING" id="176299.Atu2593"/>
<dbReference type="EnsemblBacteria" id="AAK88316">
    <property type="protein sequence ID" value="AAK88316"/>
    <property type="gene ID" value="Atu2593"/>
</dbReference>
<dbReference type="GeneID" id="1134631"/>
<dbReference type="KEGG" id="atu:Atu2593"/>
<dbReference type="PATRIC" id="fig|176299.10.peg.2597"/>
<dbReference type="eggNOG" id="COG3142">
    <property type="taxonomic scope" value="Bacteria"/>
</dbReference>
<dbReference type="HOGENOM" id="CLU_050555_3_2_5"/>
<dbReference type="OrthoDB" id="9815677at2"/>
<dbReference type="BioCyc" id="AGRO:ATU2593-MONOMER"/>
<dbReference type="Proteomes" id="UP000000813">
    <property type="component" value="Chromosome circular"/>
</dbReference>
<dbReference type="GO" id="GO:0005737">
    <property type="term" value="C:cytoplasm"/>
    <property type="evidence" value="ECO:0007669"/>
    <property type="project" value="UniProtKB-SubCell"/>
</dbReference>
<dbReference type="GO" id="GO:0005507">
    <property type="term" value="F:copper ion binding"/>
    <property type="evidence" value="ECO:0007669"/>
    <property type="project" value="TreeGrafter"/>
</dbReference>
<dbReference type="Gene3D" id="3.20.20.380">
    <property type="entry name" value="Copper homeostasis (CutC) domain"/>
    <property type="match status" value="1"/>
</dbReference>
<dbReference type="HAMAP" id="MF_00795">
    <property type="entry name" value="CutC"/>
    <property type="match status" value="1"/>
</dbReference>
<dbReference type="InterPro" id="IPR005627">
    <property type="entry name" value="CutC-like"/>
</dbReference>
<dbReference type="InterPro" id="IPR036822">
    <property type="entry name" value="CutC-like_dom_sf"/>
</dbReference>
<dbReference type="PANTHER" id="PTHR12598">
    <property type="entry name" value="COPPER HOMEOSTASIS PROTEIN CUTC"/>
    <property type="match status" value="1"/>
</dbReference>
<dbReference type="PANTHER" id="PTHR12598:SF0">
    <property type="entry name" value="COPPER HOMEOSTASIS PROTEIN CUTC HOMOLOG"/>
    <property type="match status" value="1"/>
</dbReference>
<dbReference type="Pfam" id="PF03932">
    <property type="entry name" value="CutC"/>
    <property type="match status" value="1"/>
</dbReference>
<dbReference type="SUPFAM" id="SSF110395">
    <property type="entry name" value="CutC-like"/>
    <property type="match status" value="1"/>
</dbReference>
<name>CUTC_AGRFC</name>
<sequence>MKEVPMILEICVDDVAGLEAAVRGGADRIELCAALSGGGVTPSAGFMQRAATYGLPVSVMIRPRAGDFVFTHDEADVMKRDIDAARAAGLSGVVLGASRGDGSLDMALLEDLRRHADGMDATLHRAFDVAPDMEEALEAAISLGFPRILTSGGARSALEGVKTLARLSELAKGRIVIMPGAGVRPQSVQALLDSFPITEIHASCSAVPLYDPESRVAKLGFTGAGRKATDEAAVRELKTILSAHHKGGATL</sequence>
<protein>
    <recommendedName>
        <fullName evidence="1">PF03932 family protein CutC</fullName>
    </recommendedName>
</protein>
<keyword id="KW-0963">Cytoplasm</keyword>
<keyword id="KW-1185">Reference proteome</keyword>
<gene>
    <name evidence="1" type="primary">cutC</name>
    <name type="ordered locus">Atu2593</name>
    <name type="ORF">AGR_C_4698</name>
</gene>